<keyword id="KW-0007">Acetylation</keyword>
<keyword id="KW-0119">Carbohydrate metabolism</keyword>
<keyword id="KW-0313">Glucose metabolism</keyword>
<keyword id="KW-0378">Hydrolase</keyword>
<keyword id="KW-1185">Reference proteome</keyword>
<evidence type="ECO:0000255" key="1">
    <source>
        <dbReference type="HAMAP-Rule" id="MF_01605"/>
    </source>
</evidence>
<feature type="chain" id="PRO_0000171140" description="6-phosphogluconolactonase">
    <location>
        <begin position="1"/>
        <end position="331"/>
    </location>
</feature>
<feature type="modified residue" description="N6-acetyllysine" evidence="1">
    <location>
        <position position="287"/>
    </location>
</feature>
<sequence>MKQTVYIASPESQQIHVWNLNHEGALTLTQVVDVPGQVQPMVVSPDKRYLYVGVRPEFRVLAYRIAPDDGALTFAAESVLPGSPTHISTDHQGQFVFVGSYNAGNVSVTRLEDGLPVGVVDVVEGLDGCHSANISPDNRTLWVPALKQDRICLFTVSDDGHLVAQDPAEVTTVEGAGPRHMVFHPNEQYAYCVNELNSSVDVWELKDPHGNIECVQTLDMMPENFSDTRWAADIHITPDGRHLYACDRTASLITVFSVSEDGSVLSKEGFQPTETQPRGFNVDYSGKYLIAAGQKSHHISVYEIVGEQGLLHEKGRYAVGQGPMWVVVNAH</sequence>
<accession>Q83LP7</accession>
<accession>Q7UD46</accession>
<proteinExistence type="inferred from homology"/>
<comment type="function">
    <text evidence="1">Catalyzes the hydrolysis of 6-phosphogluconolactone to 6-phosphogluconate.</text>
</comment>
<comment type="catalytic activity">
    <reaction evidence="1">
        <text>6-phospho-D-glucono-1,5-lactone + H2O = 6-phospho-D-gluconate + H(+)</text>
        <dbReference type="Rhea" id="RHEA:12556"/>
        <dbReference type="ChEBI" id="CHEBI:15377"/>
        <dbReference type="ChEBI" id="CHEBI:15378"/>
        <dbReference type="ChEBI" id="CHEBI:57955"/>
        <dbReference type="ChEBI" id="CHEBI:58759"/>
        <dbReference type="EC" id="3.1.1.31"/>
    </reaction>
</comment>
<comment type="pathway">
    <text evidence="1">Carbohydrate degradation; pentose phosphate pathway; D-ribulose 5-phosphate from D-glucose 6-phosphate (oxidative stage): step 2/3.</text>
</comment>
<comment type="similarity">
    <text evidence="1">Belongs to the cycloisomerase 2 family.</text>
</comment>
<name>6PGL_SHIFL</name>
<gene>
    <name evidence="1" type="primary">pgl</name>
    <name type="ordered locus">SF0888</name>
    <name type="ordered locus">S0935</name>
</gene>
<protein>
    <recommendedName>
        <fullName evidence="1">6-phosphogluconolactonase</fullName>
        <shortName evidence="1">6-P-gluconolactonase</shortName>
        <ecNumber evidence="1">3.1.1.31</ecNumber>
    </recommendedName>
</protein>
<dbReference type="EC" id="3.1.1.31" evidence="1"/>
<dbReference type="EMBL" id="AE005674">
    <property type="protein sequence ID" value="AAN42519.2"/>
    <property type="molecule type" value="Genomic_DNA"/>
</dbReference>
<dbReference type="EMBL" id="AE014073">
    <property type="protein sequence ID" value="AAP16392.1"/>
    <property type="molecule type" value="Genomic_DNA"/>
</dbReference>
<dbReference type="RefSeq" id="WP_000815445.1">
    <property type="nucleotide sequence ID" value="NZ_WPGW01000125.1"/>
</dbReference>
<dbReference type="SMR" id="Q83LP7"/>
<dbReference type="STRING" id="198214.SF0888"/>
<dbReference type="PaxDb" id="198214-SF0888"/>
<dbReference type="KEGG" id="sfl:SF0888"/>
<dbReference type="KEGG" id="sfx:S0935"/>
<dbReference type="PATRIC" id="fig|198214.7.peg.1033"/>
<dbReference type="HOGENOM" id="CLU_038716_2_0_6"/>
<dbReference type="UniPathway" id="UPA00115">
    <property type="reaction ID" value="UER00409"/>
</dbReference>
<dbReference type="Proteomes" id="UP000001006">
    <property type="component" value="Chromosome"/>
</dbReference>
<dbReference type="Proteomes" id="UP000002673">
    <property type="component" value="Chromosome"/>
</dbReference>
<dbReference type="GO" id="GO:0005829">
    <property type="term" value="C:cytosol"/>
    <property type="evidence" value="ECO:0007669"/>
    <property type="project" value="TreeGrafter"/>
</dbReference>
<dbReference type="GO" id="GO:0017057">
    <property type="term" value="F:6-phosphogluconolactonase activity"/>
    <property type="evidence" value="ECO:0007669"/>
    <property type="project" value="UniProtKB-UniRule"/>
</dbReference>
<dbReference type="GO" id="GO:0006006">
    <property type="term" value="P:glucose metabolic process"/>
    <property type="evidence" value="ECO:0007669"/>
    <property type="project" value="UniProtKB-KW"/>
</dbReference>
<dbReference type="GO" id="GO:0009051">
    <property type="term" value="P:pentose-phosphate shunt, oxidative branch"/>
    <property type="evidence" value="ECO:0007669"/>
    <property type="project" value="UniProtKB-UniRule"/>
</dbReference>
<dbReference type="FunFam" id="2.130.10.10:FF:000051">
    <property type="entry name" value="6-phosphogluconolactonase"/>
    <property type="match status" value="1"/>
</dbReference>
<dbReference type="Gene3D" id="2.130.10.10">
    <property type="entry name" value="YVTN repeat-like/Quinoprotein amine dehydrogenase"/>
    <property type="match status" value="1"/>
</dbReference>
<dbReference type="HAMAP" id="MF_01605">
    <property type="entry name" value="6P_gluconolactonase"/>
    <property type="match status" value="1"/>
</dbReference>
<dbReference type="InterPro" id="IPR022528">
    <property type="entry name" value="6-phosphogluconolactonase_YbhE"/>
</dbReference>
<dbReference type="InterPro" id="IPR050282">
    <property type="entry name" value="Cycloisomerase_2"/>
</dbReference>
<dbReference type="InterPro" id="IPR019405">
    <property type="entry name" value="Lactonase_7-beta_prop"/>
</dbReference>
<dbReference type="InterPro" id="IPR011045">
    <property type="entry name" value="N2O_reductase_N"/>
</dbReference>
<dbReference type="InterPro" id="IPR015943">
    <property type="entry name" value="WD40/YVTN_repeat-like_dom_sf"/>
</dbReference>
<dbReference type="NCBIfam" id="NF008258">
    <property type="entry name" value="PRK11028.1"/>
    <property type="match status" value="1"/>
</dbReference>
<dbReference type="PANTHER" id="PTHR30344:SF1">
    <property type="entry name" value="6-PHOSPHOGLUCONOLACTONASE"/>
    <property type="match status" value="1"/>
</dbReference>
<dbReference type="PANTHER" id="PTHR30344">
    <property type="entry name" value="6-PHOSPHOGLUCONOLACTONASE-RELATED"/>
    <property type="match status" value="1"/>
</dbReference>
<dbReference type="Pfam" id="PF10282">
    <property type="entry name" value="Lactonase"/>
    <property type="match status" value="1"/>
</dbReference>
<dbReference type="SUPFAM" id="SSF50974">
    <property type="entry name" value="Nitrous oxide reductase, N-terminal domain"/>
    <property type="match status" value="1"/>
</dbReference>
<reference key="1">
    <citation type="journal article" date="2002" name="Nucleic Acids Res.">
        <title>Genome sequence of Shigella flexneri 2a: insights into pathogenicity through comparison with genomes of Escherichia coli K12 and O157.</title>
        <authorList>
            <person name="Jin Q."/>
            <person name="Yuan Z."/>
            <person name="Xu J."/>
            <person name="Wang Y."/>
            <person name="Shen Y."/>
            <person name="Lu W."/>
            <person name="Wang J."/>
            <person name="Liu H."/>
            <person name="Yang J."/>
            <person name="Yang F."/>
            <person name="Zhang X."/>
            <person name="Zhang J."/>
            <person name="Yang G."/>
            <person name="Wu H."/>
            <person name="Qu D."/>
            <person name="Dong J."/>
            <person name="Sun L."/>
            <person name="Xue Y."/>
            <person name="Zhao A."/>
            <person name="Gao Y."/>
            <person name="Zhu J."/>
            <person name="Kan B."/>
            <person name="Ding K."/>
            <person name="Chen S."/>
            <person name="Cheng H."/>
            <person name="Yao Z."/>
            <person name="He B."/>
            <person name="Chen R."/>
            <person name="Ma D."/>
            <person name="Qiang B."/>
            <person name="Wen Y."/>
            <person name="Hou Y."/>
            <person name="Yu J."/>
        </authorList>
    </citation>
    <scope>NUCLEOTIDE SEQUENCE [LARGE SCALE GENOMIC DNA]</scope>
    <source>
        <strain>301 / Serotype 2a</strain>
    </source>
</reference>
<reference key="2">
    <citation type="journal article" date="2003" name="Infect. Immun.">
        <title>Complete genome sequence and comparative genomics of Shigella flexneri serotype 2a strain 2457T.</title>
        <authorList>
            <person name="Wei J."/>
            <person name="Goldberg M.B."/>
            <person name="Burland V."/>
            <person name="Venkatesan M.M."/>
            <person name="Deng W."/>
            <person name="Fournier G."/>
            <person name="Mayhew G.F."/>
            <person name="Plunkett G. III"/>
            <person name="Rose D.J."/>
            <person name="Darling A."/>
            <person name="Mau B."/>
            <person name="Perna N.T."/>
            <person name="Payne S.M."/>
            <person name="Runyen-Janecky L.J."/>
            <person name="Zhou S."/>
            <person name="Schwartz D.C."/>
            <person name="Blattner F.R."/>
        </authorList>
    </citation>
    <scope>NUCLEOTIDE SEQUENCE [LARGE SCALE GENOMIC DNA]</scope>
    <source>
        <strain>ATCC 700930 / 2457T / Serotype 2a</strain>
    </source>
</reference>
<organism>
    <name type="scientific">Shigella flexneri</name>
    <dbReference type="NCBI Taxonomy" id="623"/>
    <lineage>
        <taxon>Bacteria</taxon>
        <taxon>Pseudomonadati</taxon>
        <taxon>Pseudomonadota</taxon>
        <taxon>Gammaproteobacteria</taxon>
        <taxon>Enterobacterales</taxon>
        <taxon>Enterobacteriaceae</taxon>
        <taxon>Shigella</taxon>
    </lineage>
</organism>